<feature type="chain" id="PRO_1000000312" description="Adenine phosphoribosyltransferase">
    <location>
        <begin position="1"/>
        <end position="174"/>
    </location>
</feature>
<reference key="1">
    <citation type="journal article" date="2007" name="Environ. Microbiol.">
        <title>Whole-genome analysis of the ammonia-oxidizing bacterium, Nitrosomonas eutropha C91: implications for niche adaptation.</title>
        <authorList>
            <person name="Stein L.Y."/>
            <person name="Arp D.J."/>
            <person name="Berube P.M."/>
            <person name="Chain P.S."/>
            <person name="Hauser L."/>
            <person name="Jetten M.S."/>
            <person name="Klotz M.G."/>
            <person name="Larimer F.W."/>
            <person name="Norton J.M."/>
            <person name="Op den Camp H.J.M."/>
            <person name="Shin M."/>
            <person name="Wei X."/>
        </authorList>
    </citation>
    <scope>NUCLEOTIDE SEQUENCE [LARGE SCALE GENOMIC DNA]</scope>
    <source>
        <strain>DSM 101675 / C91 / Nm57</strain>
    </source>
</reference>
<gene>
    <name evidence="1" type="primary">apt</name>
    <name type="ordered locus">Neut_0262</name>
</gene>
<protein>
    <recommendedName>
        <fullName evidence="1">Adenine phosphoribosyltransferase</fullName>
        <shortName evidence="1">APRT</shortName>
        <ecNumber evidence="1">2.4.2.7</ecNumber>
    </recommendedName>
</protein>
<keyword id="KW-0963">Cytoplasm</keyword>
<keyword id="KW-0328">Glycosyltransferase</keyword>
<keyword id="KW-0660">Purine salvage</keyword>
<keyword id="KW-0808">Transferase</keyword>
<name>APT_NITEC</name>
<evidence type="ECO:0000255" key="1">
    <source>
        <dbReference type="HAMAP-Rule" id="MF_00004"/>
    </source>
</evidence>
<accession>Q0AJC5</accession>
<organism>
    <name type="scientific">Nitrosomonas eutropha (strain DSM 101675 / C91 / Nm57)</name>
    <dbReference type="NCBI Taxonomy" id="335283"/>
    <lineage>
        <taxon>Bacteria</taxon>
        <taxon>Pseudomonadati</taxon>
        <taxon>Pseudomonadota</taxon>
        <taxon>Betaproteobacteria</taxon>
        <taxon>Nitrosomonadales</taxon>
        <taxon>Nitrosomonadaceae</taxon>
        <taxon>Nitrosomonas</taxon>
    </lineage>
</organism>
<sequence>MSIKSRIRTIPHYPREGIMFRDITTLLKDPVGLRITIDEIAERYRAEKIDKVVGIESRGFIFAAPVAYALGAGFVPIRKQGKLPAETISCDYQLEYGYDKIEIHADAIDKDDRVLMIDDLIATGGTMEAAIKLVQEMGGKIIECCFVIDLPGVGGSTRLRQQDHPLYSLCSFDD</sequence>
<dbReference type="EC" id="2.4.2.7" evidence="1"/>
<dbReference type="EMBL" id="CP000450">
    <property type="protein sequence ID" value="ABI58546.1"/>
    <property type="molecule type" value="Genomic_DNA"/>
</dbReference>
<dbReference type="RefSeq" id="WP_011633390.1">
    <property type="nucleotide sequence ID" value="NC_008344.1"/>
</dbReference>
<dbReference type="SMR" id="Q0AJC5"/>
<dbReference type="STRING" id="335283.Neut_0262"/>
<dbReference type="KEGG" id="net:Neut_0262"/>
<dbReference type="eggNOG" id="COG0503">
    <property type="taxonomic scope" value="Bacteria"/>
</dbReference>
<dbReference type="HOGENOM" id="CLU_063339_3_0_4"/>
<dbReference type="OrthoDB" id="9803963at2"/>
<dbReference type="UniPathway" id="UPA00588">
    <property type="reaction ID" value="UER00646"/>
</dbReference>
<dbReference type="Proteomes" id="UP000001966">
    <property type="component" value="Chromosome"/>
</dbReference>
<dbReference type="GO" id="GO:0005737">
    <property type="term" value="C:cytoplasm"/>
    <property type="evidence" value="ECO:0007669"/>
    <property type="project" value="UniProtKB-SubCell"/>
</dbReference>
<dbReference type="GO" id="GO:0003999">
    <property type="term" value="F:adenine phosphoribosyltransferase activity"/>
    <property type="evidence" value="ECO:0007669"/>
    <property type="project" value="UniProtKB-UniRule"/>
</dbReference>
<dbReference type="GO" id="GO:0006168">
    <property type="term" value="P:adenine salvage"/>
    <property type="evidence" value="ECO:0007669"/>
    <property type="project" value="InterPro"/>
</dbReference>
<dbReference type="GO" id="GO:0044209">
    <property type="term" value="P:AMP salvage"/>
    <property type="evidence" value="ECO:0007669"/>
    <property type="project" value="UniProtKB-UniRule"/>
</dbReference>
<dbReference type="GO" id="GO:0006166">
    <property type="term" value="P:purine ribonucleoside salvage"/>
    <property type="evidence" value="ECO:0007669"/>
    <property type="project" value="UniProtKB-KW"/>
</dbReference>
<dbReference type="CDD" id="cd06223">
    <property type="entry name" value="PRTases_typeI"/>
    <property type="match status" value="1"/>
</dbReference>
<dbReference type="FunFam" id="3.40.50.2020:FF:000021">
    <property type="entry name" value="Adenine phosphoribosyltransferase"/>
    <property type="match status" value="1"/>
</dbReference>
<dbReference type="Gene3D" id="3.40.50.2020">
    <property type="match status" value="1"/>
</dbReference>
<dbReference type="HAMAP" id="MF_00004">
    <property type="entry name" value="Aden_phosphoribosyltr"/>
    <property type="match status" value="1"/>
</dbReference>
<dbReference type="InterPro" id="IPR005764">
    <property type="entry name" value="Ade_phspho_trans"/>
</dbReference>
<dbReference type="InterPro" id="IPR050120">
    <property type="entry name" value="Adenine_PRTase"/>
</dbReference>
<dbReference type="InterPro" id="IPR000836">
    <property type="entry name" value="PRibTrfase_dom"/>
</dbReference>
<dbReference type="InterPro" id="IPR029057">
    <property type="entry name" value="PRTase-like"/>
</dbReference>
<dbReference type="NCBIfam" id="TIGR01090">
    <property type="entry name" value="apt"/>
    <property type="match status" value="1"/>
</dbReference>
<dbReference type="NCBIfam" id="NF002634">
    <property type="entry name" value="PRK02304.1-3"/>
    <property type="match status" value="1"/>
</dbReference>
<dbReference type="NCBIfam" id="NF002636">
    <property type="entry name" value="PRK02304.1-5"/>
    <property type="match status" value="1"/>
</dbReference>
<dbReference type="PANTHER" id="PTHR11776">
    <property type="entry name" value="ADENINE PHOSPHORIBOSYLTRANSFERASE"/>
    <property type="match status" value="1"/>
</dbReference>
<dbReference type="PANTHER" id="PTHR11776:SF7">
    <property type="entry name" value="PHOSPHORIBOSYLTRANSFERASE DOMAIN-CONTAINING PROTEIN"/>
    <property type="match status" value="1"/>
</dbReference>
<dbReference type="Pfam" id="PF00156">
    <property type="entry name" value="Pribosyltran"/>
    <property type="match status" value="1"/>
</dbReference>
<dbReference type="SUPFAM" id="SSF53271">
    <property type="entry name" value="PRTase-like"/>
    <property type="match status" value="1"/>
</dbReference>
<dbReference type="PROSITE" id="PS00103">
    <property type="entry name" value="PUR_PYR_PR_TRANSFER"/>
    <property type="match status" value="1"/>
</dbReference>
<comment type="function">
    <text evidence="1">Catalyzes a salvage reaction resulting in the formation of AMP, that is energically less costly than de novo synthesis.</text>
</comment>
<comment type="catalytic activity">
    <reaction evidence="1">
        <text>AMP + diphosphate = 5-phospho-alpha-D-ribose 1-diphosphate + adenine</text>
        <dbReference type="Rhea" id="RHEA:16609"/>
        <dbReference type="ChEBI" id="CHEBI:16708"/>
        <dbReference type="ChEBI" id="CHEBI:33019"/>
        <dbReference type="ChEBI" id="CHEBI:58017"/>
        <dbReference type="ChEBI" id="CHEBI:456215"/>
        <dbReference type="EC" id="2.4.2.7"/>
    </reaction>
</comment>
<comment type="pathway">
    <text evidence="1">Purine metabolism; AMP biosynthesis via salvage pathway; AMP from adenine: step 1/1.</text>
</comment>
<comment type="subunit">
    <text evidence="1">Homodimer.</text>
</comment>
<comment type="subcellular location">
    <subcellularLocation>
        <location evidence="1">Cytoplasm</location>
    </subcellularLocation>
</comment>
<comment type="similarity">
    <text evidence="1">Belongs to the purine/pyrimidine phosphoribosyltransferase family.</text>
</comment>
<proteinExistence type="inferred from homology"/>